<name>Y1513_SYNY3</name>
<accession>P73954</accession>
<gene>
    <name type="ordered locus">slr1513</name>
</gene>
<proteinExistence type="evidence at protein level"/>
<organism>
    <name type="scientific">Synechocystis sp. (strain ATCC 27184 / PCC 6803 / Kazusa)</name>
    <dbReference type="NCBI Taxonomy" id="1111708"/>
    <lineage>
        <taxon>Bacteria</taxon>
        <taxon>Bacillati</taxon>
        <taxon>Cyanobacteriota</taxon>
        <taxon>Cyanophyceae</taxon>
        <taxon>Synechococcales</taxon>
        <taxon>Merismopediaceae</taxon>
        <taxon>Synechocystis</taxon>
    </lineage>
</organism>
<reference key="1">
    <citation type="journal article" date="1996" name="DNA Res.">
        <title>Sequence analysis of the genome of the unicellular cyanobacterium Synechocystis sp. strain PCC6803. II. Sequence determination of the entire genome and assignment of potential protein-coding regions.</title>
        <authorList>
            <person name="Kaneko T."/>
            <person name="Sato S."/>
            <person name="Kotani H."/>
            <person name="Tanaka A."/>
            <person name="Asamizu E."/>
            <person name="Nakamura Y."/>
            <person name="Miyajima N."/>
            <person name="Hirosawa M."/>
            <person name="Sugiura M."/>
            <person name="Sasamoto S."/>
            <person name="Kimura T."/>
            <person name="Hosouchi T."/>
            <person name="Matsuno A."/>
            <person name="Muraki A."/>
            <person name="Nakazaki N."/>
            <person name="Naruo K."/>
            <person name="Okumura S."/>
            <person name="Shimpo S."/>
            <person name="Takeuchi C."/>
            <person name="Wada T."/>
            <person name="Watanabe A."/>
            <person name="Yamada M."/>
            <person name="Yasuda M."/>
            <person name="Tabata S."/>
        </authorList>
    </citation>
    <scope>NUCLEOTIDE SEQUENCE [LARGE SCALE GENOMIC DNA]</scope>
    <source>
        <strain>ATCC 27184 / PCC 6803 / Kazusa</strain>
    </source>
</reference>
<reference key="2">
    <citation type="journal article" date="1998" name="FEBS Lett.">
        <title>2D-isolation of pure plasma and thylakoid membranes from the cyanobacterium Synechocystis sp. PCC 6803.</title>
        <authorList>
            <person name="Norling B."/>
            <person name="Zak E."/>
            <person name="Andersson B."/>
            <person name="Pakrasi H.B."/>
        </authorList>
    </citation>
    <scope>PROTEIN SEQUENCE OF 2-13</scope>
    <scope>SUBCELLULAR LOCATION TO PLASMA MEMBRANE</scope>
</reference>
<reference key="3">
    <citation type="journal article" date="2004" name="J. Biol. Chem.">
        <title>Alterations in global patterns of gene expression in Synechocystis sp. PCC 6803 in response to inorganic carbon limitation and the inactivation of ndhR, a LysR family regulator.</title>
        <authorList>
            <person name="Wang H.L."/>
            <person name="Postier B.L."/>
            <person name="Burnap R.L."/>
        </authorList>
    </citation>
    <scope>INDUCTION</scope>
</reference>
<reference key="4">
    <citation type="journal article" date="2005" name="Proteomics">
        <title>Proteomic studies of the thylakoid membrane of Synechocystis sp. PCC 6803.</title>
        <authorList>
            <person name="Srivastava R."/>
            <person name="Pisareva T."/>
            <person name="Norling B."/>
        </authorList>
    </citation>
    <scope>SUBCELLULAR LOCATION IN THYLAKOID</scope>
</reference>
<sequence length="110" mass="12007">MAKPANKLVIVTEKILLKKIAKIIDESGAKGYTVMNTGGKGSRNVRSSGQPNTSDIEANIKFEILTETREMAEEIADRVAVKYFNDYAGIIYICSAEVLYGHTFCGPEGC</sequence>
<evidence type="ECO:0000269" key="1">
    <source>
    </source>
</evidence>
<evidence type="ECO:0000269" key="2">
    <source>
    </source>
</evidence>
<evidence type="ECO:0000305" key="3"/>
<evidence type="ECO:0007829" key="4">
    <source>
        <dbReference type="PDB" id="5O3S"/>
    </source>
</evidence>
<evidence type="ECO:0007829" key="5">
    <source>
        <dbReference type="PDB" id="6WUE"/>
    </source>
</evidence>
<keyword id="KW-0002">3D-structure</keyword>
<keyword id="KW-1003">Cell membrane</keyword>
<keyword id="KW-0903">Direct protein sequencing</keyword>
<keyword id="KW-0472">Membrane</keyword>
<keyword id="KW-1185">Reference proteome</keyword>
<keyword id="KW-0793">Thylakoid</keyword>
<feature type="initiator methionine" description="Removed" evidence="2">
    <location>
        <position position="1"/>
    </location>
</feature>
<feature type="chain" id="PRO_0000352739" description="Membrane-associated protein slr1513">
    <location>
        <begin position="2"/>
        <end position="110"/>
    </location>
</feature>
<feature type="strand" evidence="5">
    <location>
        <begin position="6"/>
        <end position="13"/>
    </location>
</feature>
<feature type="helix" evidence="5">
    <location>
        <begin position="14"/>
        <end position="16"/>
    </location>
</feature>
<feature type="helix" evidence="5">
    <location>
        <begin position="17"/>
        <end position="27"/>
    </location>
</feature>
<feature type="strand" evidence="5">
    <location>
        <begin position="30"/>
        <end position="37"/>
    </location>
</feature>
<feature type="strand" evidence="5">
    <location>
        <begin position="59"/>
        <end position="68"/>
    </location>
</feature>
<feature type="helix" evidence="5">
    <location>
        <begin position="69"/>
        <end position="83"/>
    </location>
</feature>
<feature type="turn" evidence="5">
    <location>
        <begin position="84"/>
        <end position="86"/>
    </location>
</feature>
<feature type="strand" evidence="5">
    <location>
        <begin position="89"/>
        <end position="94"/>
    </location>
</feature>
<feature type="helix" evidence="4">
    <location>
        <begin position="102"/>
        <end position="105"/>
    </location>
</feature>
<feature type="turn" evidence="5">
    <location>
        <begin position="107"/>
        <end position="109"/>
    </location>
</feature>
<comment type="subcellular location">
    <subcellularLocation>
        <location evidence="3">Cellular thylakoid membrane</location>
        <topology evidence="3">Peripheral membrane protein</topology>
        <orientation evidence="3">Cytoplasmic side</orientation>
    </subcellularLocation>
    <subcellularLocation>
        <location evidence="3">Cell membrane</location>
        <topology evidence="3">Peripheral membrane protein</topology>
        <orientation evidence="3">Cytoplasmic side</orientation>
    </subcellularLocation>
</comment>
<comment type="induction">
    <text evidence="1">By limited inorganic carbon availability.</text>
</comment>
<protein>
    <recommendedName>
        <fullName>Membrane-associated protein slr1513</fullName>
    </recommendedName>
</protein>
<dbReference type="EMBL" id="BA000022">
    <property type="protein sequence ID" value="BAA18021.1"/>
    <property type="molecule type" value="Genomic_DNA"/>
</dbReference>
<dbReference type="PIR" id="S75460">
    <property type="entry name" value="S75460"/>
</dbReference>
<dbReference type="PDB" id="5O3P">
    <property type="method" value="X-ray"/>
    <property type="resolution" value="1.75 A"/>
    <property type="chains" value="A/B/C=1-110"/>
</dbReference>
<dbReference type="PDB" id="5O3Q">
    <property type="method" value="X-ray"/>
    <property type="resolution" value="1.75 A"/>
    <property type="chains" value="A/B/C=1-110"/>
</dbReference>
<dbReference type="PDB" id="5O3R">
    <property type="method" value="X-ray"/>
    <property type="resolution" value="1.90 A"/>
    <property type="chains" value="A/B/C=1-110"/>
</dbReference>
<dbReference type="PDB" id="5O3S">
    <property type="method" value="X-ray"/>
    <property type="resolution" value="2.20 A"/>
    <property type="chains" value="A=1-110"/>
</dbReference>
<dbReference type="PDB" id="6WUE">
    <property type="method" value="X-ray"/>
    <property type="resolution" value="1.80 A"/>
    <property type="chains" value="A/B=1-110"/>
</dbReference>
<dbReference type="PDB" id="7CYF">
    <property type="method" value="EM"/>
    <property type="resolution" value="3.15 A"/>
    <property type="chains" value="D/E/F=1-110"/>
</dbReference>
<dbReference type="PDB" id="7EGK">
    <property type="method" value="EM"/>
    <property type="resolution" value="2.70 A"/>
    <property type="chains" value="B/D/F=1-110"/>
</dbReference>
<dbReference type="PDB" id="7EGL">
    <property type="method" value="X-ray"/>
    <property type="resolution" value="3.20 A"/>
    <property type="chains" value="B=1-110"/>
</dbReference>
<dbReference type="PDB" id="7OBJ">
    <property type="method" value="X-ray"/>
    <property type="resolution" value="2.00 A"/>
    <property type="chains" value="A/B/C=1-110"/>
</dbReference>
<dbReference type="PDB" id="7R2Y">
    <property type="method" value="X-ray"/>
    <property type="resolution" value="2.15 A"/>
    <property type="chains" value="A/B/C=1-110"/>
</dbReference>
<dbReference type="PDB" id="7R2Z">
    <property type="method" value="X-ray"/>
    <property type="resolution" value="2.40 A"/>
    <property type="chains" value="A/B/C=1-110"/>
</dbReference>
<dbReference type="PDB" id="7R30">
    <property type="method" value="X-ray"/>
    <property type="resolution" value="1.90 A"/>
    <property type="chains" value="A/B/C=1-110"/>
</dbReference>
<dbReference type="PDB" id="7R31">
    <property type="method" value="X-ray"/>
    <property type="resolution" value="1.52 A"/>
    <property type="chains" value="A/B/C=1-110"/>
</dbReference>
<dbReference type="PDB" id="7R32">
    <property type="method" value="X-ray"/>
    <property type="resolution" value="1.75 A"/>
    <property type="chains" value="A/B/C=1-104"/>
</dbReference>
<dbReference type="PDBsum" id="5O3P"/>
<dbReference type="PDBsum" id="5O3Q"/>
<dbReference type="PDBsum" id="5O3R"/>
<dbReference type="PDBsum" id="5O3S"/>
<dbReference type="PDBsum" id="6WUE"/>
<dbReference type="PDBsum" id="7CYF"/>
<dbReference type="PDBsum" id="7EGK"/>
<dbReference type="PDBsum" id="7EGL"/>
<dbReference type="PDBsum" id="7OBJ"/>
<dbReference type="PDBsum" id="7R2Y"/>
<dbReference type="PDBsum" id="7R2Z"/>
<dbReference type="PDBsum" id="7R30"/>
<dbReference type="PDBsum" id="7R31"/>
<dbReference type="PDBsum" id="7R32"/>
<dbReference type="EMDB" id="EMD-30499"/>
<dbReference type="EMDB" id="EMD-31135"/>
<dbReference type="SMR" id="P73954"/>
<dbReference type="STRING" id="1148.gene:10498891"/>
<dbReference type="PaxDb" id="1148-1653105"/>
<dbReference type="EnsemblBacteria" id="BAA18021">
    <property type="protein sequence ID" value="BAA18021"/>
    <property type="gene ID" value="BAA18021"/>
</dbReference>
<dbReference type="KEGG" id="syn:slr1513"/>
<dbReference type="eggNOG" id="COG0347">
    <property type="taxonomic scope" value="Bacteria"/>
</dbReference>
<dbReference type="InParanoid" id="P73954"/>
<dbReference type="Proteomes" id="UP000001425">
    <property type="component" value="Chromosome"/>
</dbReference>
<dbReference type="GO" id="GO:0031676">
    <property type="term" value="C:plasma membrane-derived thylakoid membrane"/>
    <property type="evidence" value="ECO:0007669"/>
    <property type="project" value="UniProtKB-SubCell"/>
</dbReference>
<dbReference type="GO" id="GO:0030234">
    <property type="term" value="F:enzyme regulator activity"/>
    <property type="evidence" value="ECO:0007669"/>
    <property type="project" value="InterPro"/>
</dbReference>
<dbReference type="GO" id="GO:0006808">
    <property type="term" value="P:regulation of nitrogen utilization"/>
    <property type="evidence" value="ECO:0007669"/>
    <property type="project" value="InterPro"/>
</dbReference>
<dbReference type="Gene3D" id="3.30.70.120">
    <property type="match status" value="1"/>
</dbReference>
<dbReference type="InterPro" id="IPR002187">
    <property type="entry name" value="N-reg_PII"/>
</dbReference>
<dbReference type="InterPro" id="IPR011322">
    <property type="entry name" value="N-reg_PII-like_a/b"/>
</dbReference>
<dbReference type="InterPro" id="IPR015867">
    <property type="entry name" value="N-reg_PII/ATP_PRibTrfase_C"/>
</dbReference>
<dbReference type="Pfam" id="PF00543">
    <property type="entry name" value="P-II"/>
    <property type="match status" value="1"/>
</dbReference>
<dbReference type="SUPFAM" id="SSF54913">
    <property type="entry name" value="GlnB-like"/>
    <property type="match status" value="1"/>
</dbReference>